<keyword id="KW-0963">Cytoplasm</keyword>
<keyword id="KW-0704">Schiff base</keyword>
<keyword id="KW-0784">Thiamine biosynthesis</keyword>
<keyword id="KW-0808">Transferase</keyword>
<feature type="chain" id="PRO_1000124589" description="Thiazole synthase">
    <location>
        <begin position="1"/>
        <end position="261"/>
    </location>
</feature>
<feature type="active site" description="Schiff-base intermediate with DXP" evidence="1">
    <location>
        <position position="102"/>
    </location>
</feature>
<feature type="binding site" evidence="1">
    <location>
        <position position="163"/>
    </location>
    <ligand>
        <name>1-deoxy-D-xylulose 5-phosphate</name>
        <dbReference type="ChEBI" id="CHEBI:57792"/>
    </ligand>
</feature>
<feature type="binding site" evidence="1">
    <location>
        <begin position="189"/>
        <end position="190"/>
    </location>
    <ligand>
        <name>1-deoxy-D-xylulose 5-phosphate</name>
        <dbReference type="ChEBI" id="CHEBI:57792"/>
    </ligand>
</feature>
<feature type="binding site" evidence="1">
    <location>
        <begin position="211"/>
        <end position="212"/>
    </location>
    <ligand>
        <name>1-deoxy-D-xylulose 5-phosphate</name>
        <dbReference type="ChEBI" id="CHEBI:57792"/>
    </ligand>
</feature>
<dbReference type="EC" id="2.8.1.10" evidence="1"/>
<dbReference type="EMBL" id="CP001182">
    <property type="protein sequence ID" value="ACJ42731.1"/>
    <property type="molecule type" value="Genomic_DNA"/>
</dbReference>
<dbReference type="RefSeq" id="WP_001154366.1">
    <property type="nucleotide sequence ID" value="NC_011586.2"/>
</dbReference>
<dbReference type="SMR" id="B7I2M9"/>
<dbReference type="KEGG" id="abn:AB57_2623"/>
<dbReference type="HOGENOM" id="CLU_062233_1_1_6"/>
<dbReference type="UniPathway" id="UPA00060"/>
<dbReference type="Proteomes" id="UP000007094">
    <property type="component" value="Chromosome"/>
</dbReference>
<dbReference type="GO" id="GO:0005737">
    <property type="term" value="C:cytoplasm"/>
    <property type="evidence" value="ECO:0007669"/>
    <property type="project" value="UniProtKB-SubCell"/>
</dbReference>
<dbReference type="GO" id="GO:1990107">
    <property type="term" value="F:thiazole synthase activity"/>
    <property type="evidence" value="ECO:0007669"/>
    <property type="project" value="UniProtKB-EC"/>
</dbReference>
<dbReference type="GO" id="GO:0009229">
    <property type="term" value="P:thiamine diphosphate biosynthetic process"/>
    <property type="evidence" value="ECO:0007669"/>
    <property type="project" value="UniProtKB-UniRule"/>
</dbReference>
<dbReference type="CDD" id="cd04728">
    <property type="entry name" value="ThiG"/>
    <property type="match status" value="1"/>
</dbReference>
<dbReference type="Gene3D" id="3.20.20.70">
    <property type="entry name" value="Aldolase class I"/>
    <property type="match status" value="1"/>
</dbReference>
<dbReference type="HAMAP" id="MF_00443">
    <property type="entry name" value="ThiG"/>
    <property type="match status" value="1"/>
</dbReference>
<dbReference type="InterPro" id="IPR013785">
    <property type="entry name" value="Aldolase_TIM"/>
</dbReference>
<dbReference type="InterPro" id="IPR033983">
    <property type="entry name" value="Thiazole_synthase_ThiG"/>
</dbReference>
<dbReference type="InterPro" id="IPR008867">
    <property type="entry name" value="ThiG"/>
</dbReference>
<dbReference type="PANTHER" id="PTHR34266">
    <property type="entry name" value="THIAZOLE SYNTHASE"/>
    <property type="match status" value="1"/>
</dbReference>
<dbReference type="PANTHER" id="PTHR34266:SF2">
    <property type="entry name" value="THIAZOLE SYNTHASE"/>
    <property type="match status" value="1"/>
</dbReference>
<dbReference type="Pfam" id="PF05690">
    <property type="entry name" value="ThiG"/>
    <property type="match status" value="1"/>
</dbReference>
<dbReference type="SUPFAM" id="SSF110399">
    <property type="entry name" value="ThiG-like"/>
    <property type="match status" value="1"/>
</dbReference>
<organism>
    <name type="scientific">Acinetobacter baumannii (strain AB0057)</name>
    <dbReference type="NCBI Taxonomy" id="480119"/>
    <lineage>
        <taxon>Bacteria</taxon>
        <taxon>Pseudomonadati</taxon>
        <taxon>Pseudomonadota</taxon>
        <taxon>Gammaproteobacteria</taxon>
        <taxon>Moraxellales</taxon>
        <taxon>Moraxellaceae</taxon>
        <taxon>Acinetobacter</taxon>
        <taxon>Acinetobacter calcoaceticus/baumannii complex</taxon>
    </lineage>
</organism>
<proteinExistence type="inferred from homology"/>
<protein>
    <recommendedName>
        <fullName evidence="1">Thiazole synthase</fullName>
        <ecNumber evidence="1">2.8.1.10</ecNumber>
    </recommendedName>
</protein>
<accession>B7I2M9</accession>
<sequence>MQDTPLIIGSRSFQSRLLVGTGKYKDLNETDLAIQASGAEIVTVAIRRVNIGQNPDQPNLLSVIPPEKYTILPNTAGCFDADSAVRTCMLARELLDGHNLVKLEVLGDEKTLYPNVTETLKAARTLIDDGFEIMVYTSDDPIIAQELESMGCVAIMPLGSLIGSGLGILNPHTISIIKENAKVPVLVDAGVGTASDAAIAMELGCDGVLMNTAIAAAQNPILMASAMKKAVEAGREAFLAGRMPRKRMANASSPETGYFFK</sequence>
<name>THIG_ACIB5</name>
<evidence type="ECO:0000255" key="1">
    <source>
        <dbReference type="HAMAP-Rule" id="MF_00443"/>
    </source>
</evidence>
<comment type="function">
    <text evidence="1">Catalyzes the rearrangement of 1-deoxy-D-xylulose 5-phosphate (DXP) to produce the thiazole phosphate moiety of thiamine. Sulfur is provided by the thiocarboxylate moiety of the carrier protein ThiS. In vitro, sulfur can be provided by H(2)S.</text>
</comment>
<comment type="catalytic activity">
    <reaction evidence="1">
        <text>[ThiS sulfur-carrier protein]-C-terminal-Gly-aminoethanethioate + 2-iminoacetate + 1-deoxy-D-xylulose 5-phosphate = [ThiS sulfur-carrier protein]-C-terminal Gly-Gly + 2-[(2R,5Z)-2-carboxy-4-methylthiazol-5(2H)-ylidene]ethyl phosphate + 2 H2O + H(+)</text>
        <dbReference type="Rhea" id="RHEA:26297"/>
        <dbReference type="Rhea" id="RHEA-COMP:12909"/>
        <dbReference type="Rhea" id="RHEA-COMP:19908"/>
        <dbReference type="ChEBI" id="CHEBI:15377"/>
        <dbReference type="ChEBI" id="CHEBI:15378"/>
        <dbReference type="ChEBI" id="CHEBI:57792"/>
        <dbReference type="ChEBI" id="CHEBI:62899"/>
        <dbReference type="ChEBI" id="CHEBI:77846"/>
        <dbReference type="ChEBI" id="CHEBI:90778"/>
        <dbReference type="ChEBI" id="CHEBI:232372"/>
        <dbReference type="EC" id="2.8.1.10"/>
    </reaction>
</comment>
<comment type="pathway">
    <text evidence="1">Cofactor biosynthesis; thiamine diphosphate biosynthesis.</text>
</comment>
<comment type="subunit">
    <text evidence="1">Homotetramer. Forms heterodimers with either ThiH or ThiS.</text>
</comment>
<comment type="subcellular location">
    <subcellularLocation>
        <location evidence="1">Cytoplasm</location>
    </subcellularLocation>
</comment>
<comment type="similarity">
    <text evidence="1">Belongs to the ThiG family.</text>
</comment>
<gene>
    <name evidence="1" type="primary">thiG</name>
    <name type="ordered locus">AB57_2623</name>
</gene>
<reference key="1">
    <citation type="journal article" date="2008" name="J. Bacteriol.">
        <title>Comparative genome sequence analysis of multidrug-resistant Acinetobacter baumannii.</title>
        <authorList>
            <person name="Adams M.D."/>
            <person name="Goglin K."/>
            <person name="Molyneaux N."/>
            <person name="Hujer K.M."/>
            <person name="Lavender H."/>
            <person name="Jamison J.J."/>
            <person name="MacDonald I.J."/>
            <person name="Martin K.M."/>
            <person name="Russo T."/>
            <person name="Campagnari A.A."/>
            <person name="Hujer A.M."/>
            <person name="Bonomo R.A."/>
            <person name="Gill S.R."/>
        </authorList>
    </citation>
    <scope>NUCLEOTIDE SEQUENCE [LARGE SCALE GENOMIC DNA]</scope>
    <source>
        <strain>AB0057</strain>
    </source>
</reference>